<evidence type="ECO:0000255" key="1">
    <source>
        <dbReference type="HAMAP-Rule" id="MF_01813"/>
    </source>
</evidence>
<dbReference type="EC" id="2.1.1.163" evidence="1"/>
<dbReference type="EC" id="2.1.1.201" evidence="1"/>
<dbReference type="EMBL" id="CP000577">
    <property type="protein sequence ID" value="ABN75127.1"/>
    <property type="molecule type" value="Genomic_DNA"/>
</dbReference>
<dbReference type="RefSeq" id="WP_002721909.1">
    <property type="nucleotide sequence ID" value="NC_009049.1"/>
</dbReference>
<dbReference type="SMR" id="A3PFL1"/>
<dbReference type="GeneID" id="67448109"/>
<dbReference type="KEGG" id="rsh:Rsph17029_0007"/>
<dbReference type="HOGENOM" id="CLU_037990_0_0_5"/>
<dbReference type="UniPathway" id="UPA00079">
    <property type="reaction ID" value="UER00169"/>
</dbReference>
<dbReference type="UniPathway" id="UPA00232"/>
<dbReference type="GO" id="GO:0008425">
    <property type="term" value="F:2-methoxy-6-polyprenyl-1,4-benzoquinol methyltransferase activity"/>
    <property type="evidence" value="ECO:0007669"/>
    <property type="project" value="UniProtKB-UniRule"/>
</dbReference>
<dbReference type="GO" id="GO:0043770">
    <property type="term" value="F:demethylmenaquinone methyltransferase activity"/>
    <property type="evidence" value="ECO:0007669"/>
    <property type="project" value="UniProtKB-UniRule"/>
</dbReference>
<dbReference type="GO" id="GO:0009060">
    <property type="term" value="P:aerobic respiration"/>
    <property type="evidence" value="ECO:0007669"/>
    <property type="project" value="UniProtKB-UniRule"/>
</dbReference>
<dbReference type="GO" id="GO:0009234">
    <property type="term" value="P:menaquinone biosynthetic process"/>
    <property type="evidence" value="ECO:0007669"/>
    <property type="project" value="UniProtKB-UniRule"/>
</dbReference>
<dbReference type="GO" id="GO:0032259">
    <property type="term" value="P:methylation"/>
    <property type="evidence" value="ECO:0007669"/>
    <property type="project" value="UniProtKB-KW"/>
</dbReference>
<dbReference type="CDD" id="cd02440">
    <property type="entry name" value="AdoMet_MTases"/>
    <property type="match status" value="1"/>
</dbReference>
<dbReference type="FunFam" id="3.40.50.150:FF:000064">
    <property type="entry name" value="2-methoxy-6-polyprenyl-1,4-benzoquinol methylase, mitochondrial"/>
    <property type="match status" value="1"/>
</dbReference>
<dbReference type="Gene3D" id="3.40.50.150">
    <property type="entry name" value="Vaccinia Virus protein VP39"/>
    <property type="match status" value="1"/>
</dbReference>
<dbReference type="HAMAP" id="MF_01813">
    <property type="entry name" value="MenG_UbiE_methyltr"/>
    <property type="match status" value="1"/>
</dbReference>
<dbReference type="InterPro" id="IPR029063">
    <property type="entry name" value="SAM-dependent_MTases_sf"/>
</dbReference>
<dbReference type="InterPro" id="IPR004033">
    <property type="entry name" value="UbiE/COQ5_MeTrFase"/>
</dbReference>
<dbReference type="InterPro" id="IPR023576">
    <property type="entry name" value="UbiE/COQ5_MeTrFase_CS"/>
</dbReference>
<dbReference type="NCBIfam" id="TIGR01934">
    <property type="entry name" value="MenG_MenH_UbiE"/>
    <property type="match status" value="1"/>
</dbReference>
<dbReference type="NCBIfam" id="NF001242">
    <property type="entry name" value="PRK00216.1-3"/>
    <property type="match status" value="1"/>
</dbReference>
<dbReference type="NCBIfam" id="NF001244">
    <property type="entry name" value="PRK00216.1-5"/>
    <property type="match status" value="1"/>
</dbReference>
<dbReference type="PANTHER" id="PTHR43591:SF24">
    <property type="entry name" value="2-METHOXY-6-POLYPRENYL-1,4-BENZOQUINOL METHYLASE, MITOCHONDRIAL"/>
    <property type="match status" value="1"/>
</dbReference>
<dbReference type="PANTHER" id="PTHR43591">
    <property type="entry name" value="METHYLTRANSFERASE"/>
    <property type="match status" value="1"/>
</dbReference>
<dbReference type="Pfam" id="PF01209">
    <property type="entry name" value="Ubie_methyltran"/>
    <property type="match status" value="1"/>
</dbReference>
<dbReference type="SUPFAM" id="SSF53335">
    <property type="entry name" value="S-adenosyl-L-methionine-dependent methyltransferases"/>
    <property type="match status" value="1"/>
</dbReference>
<dbReference type="PROSITE" id="PS51608">
    <property type="entry name" value="SAM_MT_UBIE"/>
    <property type="match status" value="1"/>
</dbReference>
<dbReference type="PROSITE" id="PS01183">
    <property type="entry name" value="UBIE_1"/>
    <property type="match status" value="1"/>
</dbReference>
<dbReference type="PROSITE" id="PS01184">
    <property type="entry name" value="UBIE_2"/>
    <property type="match status" value="1"/>
</dbReference>
<keyword id="KW-0474">Menaquinone biosynthesis</keyword>
<keyword id="KW-0489">Methyltransferase</keyword>
<keyword id="KW-0949">S-adenosyl-L-methionine</keyword>
<keyword id="KW-0808">Transferase</keyword>
<keyword id="KW-0831">Ubiquinone biosynthesis</keyword>
<protein>
    <recommendedName>
        <fullName evidence="1">Ubiquinone/menaquinone biosynthesis C-methyltransferase UbiE</fullName>
        <ecNumber evidence="1">2.1.1.163</ecNumber>
        <ecNumber evidence="1">2.1.1.201</ecNumber>
    </recommendedName>
    <alternativeName>
        <fullName evidence="1">2-methoxy-6-polyprenyl-1,4-benzoquinol methylase</fullName>
    </alternativeName>
    <alternativeName>
        <fullName evidence="1">Demethylmenaquinone methyltransferase</fullName>
    </alternativeName>
</protein>
<feature type="chain" id="PRO_1000187795" description="Ubiquinone/menaquinone biosynthesis C-methyltransferase UbiE">
    <location>
        <begin position="1"/>
        <end position="250"/>
    </location>
</feature>
<feature type="binding site" evidence="1">
    <location>
        <position position="74"/>
    </location>
    <ligand>
        <name>S-adenosyl-L-methionine</name>
        <dbReference type="ChEBI" id="CHEBI:59789"/>
    </ligand>
</feature>
<feature type="binding site" evidence="1">
    <location>
        <position position="94"/>
    </location>
    <ligand>
        <name>S-adenosyl-L-methionine</name>
        <dbReference type="ChEBI" id="CHEBI:59789"/>
    </ligand>
</feature>
<feature type="binding site" evidence="1">
    <location>
        <begin position="122"/>
        <end position="123"/>
    </location>
    <ligand>
        <name>S-adenosyl-L-methionine</name>
        <dbReference type="ChEBI" id="CHEBI:59789"/>
    </ligand>
</feature>
<feature type="binding site" evidence="1">
    <location>
        <position position="139"/>
    </location>
    <ligand>
        <name>S-adenosyl-L-methionine</name>
        <dbReference type="ChEBI" id="CHEBI:59789"/>
    </ligand>
</feature>
<name>UBIE_CERS1</name>
<comment type="function">
    <text evidence="1">Methyltransferase required for the conversion of demethylmenaquinol (DMKH2) to menaquinol (MKH2) and the conversion of 2-polyprenyl-6-methoxy-1,4-benzoquinol (DDMQH2) to 2-polyprenyl-3-methyl-6-methoxy-1,4-benzoquinol (DMQH2).</text>
</comment>
<comment type="catalytic activity">
    <reaction evidence="1">
        <text>a 2-demethylmenaquinol + S-adenosyl-L-methionine = a menaquinol + S-adenosyl-L-homocysteine + H(+)</text>
        <dbReference type="Rhea" id="RHEA:42640"/>
        <dbReference type="Rhea" id="RHEA-COMP:9539"/>
        <dbReference type="Rhea" id="RHEA-COMP:9563"/>
        <dbReference type="ChEBI" id="CHEBI:15378"/>
        <dbReference type="ChEBI" id="CHEBI:18151"/>
        <dbReference type="ChEBI" id="CHEBI:55437"/>
        <dbReference type="ChEBI" id="CHEBI:57856"/>
        <dbReference type="ChEBI" id="CHEBI:59789"/>
        <dbReference type="EC" id="2.1.1.163"/>
    </reaction>
</comment>
<comment type="catalytic activity">
    <reaction evidence="1">
        <text>a 2-methoxy-6-(all-trans-polyprenyl)benzene-1,4-diol + S-adenosyl-L-methionine = a 5-methoxy-2-methyl-3-(all-trans-polyprenyl)benzene-1,4-diol + S-adenosyl-L-homocysteine + H(+)</text>
        <dbReference type="Rhea" id="RHEA:28286"/>
        <dbReference type="Rhea" id="RHEA-COMP:10858"/>
        <dbReference type="Rhea" id="RHEA-COMP:10859"/>
        <dbReference type="ChEBI" id="CHEBI:15378"/>
        <dbReference type="ChEBI" id="CHEBI:57856"/>
        <dbReference type="ChEBI" id="CHEBI:59789"/>
        <dbReference type="ChEBI" id="CHEBI:84166"/>
        <dbReference type="ChEBI" id="CHEBI:84167"/>
        <dbReference type="EC" id="2.1.1.201"/>
    </reaction>
</comment>
<comment type="pathway">
    <text evidence="1">Quinol/quinone metabolism; menaquinone biosynthesis; menaquinol from 1,4-dihydroxy-2-naphthoate: step 2/2.</text>
</comment>
<comment type="pathway">
    <text evidence="1">Cofactor biosynthesis; ubiquinone biosynthesis.</text>
</comment>
<comment type="similarity">
    <text evidence="1">Belongs to the class I-like SAM-binding methyltransferase superfamily. MenG/UbiE family.</text>
</comment>
<organism>
    <name type="scientific">Cereibacter sphaeroides (strain ATCC 17029 / ATH 2.4.9)</name>
    <name type="common">Rhodobacter sphaeroides</name>
    <dbReference type="NCBI Taxonomy" id="349101"/>
    <lineage>
        <taxon>Bacteria</taxon>
        <taxon>Pseudomonadati</taxon>
        <taxon>Pseudomonadota</taxon>
        <taxon>Alphaproteobacteria</taxon>
        <taxon>Rhodobacterales</taxon>
        <taxon>Paracoccaceae</taxon>
        <taxon>Cereibacter</taxon>
    </lineage>
</organism>
<accession>A3PFL1</accession>
<sequence length="250" mass="28039">MSDETSNTTHFGFRTVPEGEKAGMVHGVFTRVASKYDIMNDLMSGGVHRLWKDAMMDWLAPRPGQKLLDVAGGTGDISFRFLKRAPGAEATVCDMTESMLVEGRQRADAAQMADRLDWVVGDAMALPFASNTFDVYTISFGIRNVTRVQDALNEAYRVLKPGGRLMVLEFSQLPNPMMQWAYDRYSFNVIPVMGQIVANDRDSYQYLVESIRKFPDQETFADMIRKAGFGLVKYRNLSLGIAALHSGWKI</sequence>
<gene>
    <name evidence="1" type="primary">ubiE</name>
    <name type="ordered locus">Rsph17029_0007</name>
</gene>
<proteinExistence type="inferred from homology"/>
<reference key="1">
    <citation type="submission" date="2007-02" db="EMBL/GenBank/DDBJ databases">
        <title>Complete sequence of chromosome 1 of Rhodobacter sphaeroides ATCC 17029.</title>
        <authorList>
            <person name="Copeland A."/>
            <person name="Lucas S."/>
            <person name="Lapidus A."/>
            <person name="Barry K."/>
            <person name="Detter J.C."/>
            <person name="Glavina del Rio T."/>
            <person name="Hammon N."/>
            <person name="Israni S."/>
            <person name="Dalin E."/>
            <person name="Tice H."/>
            <person name="Pitluck S."/>
            <person name="Kiss H."/>
            <person name="Brettin T."/>
            <person name="Bruce D."/>
            <person name="Han C."/>
            <person name="Tapia R."/>
            <person name="Gilna P."/>
            <person name="Schmutz J."/>
            <person name="Larimer F."/>
            <person name="Land M."/>
            <person name="Hauser L."/>
            <person name="Kyrpides N."/>
            <person name="Mikhailova N."/>
            <person name="Richardson P."/>
            <person name="Mackenzie C."/>
            <person name="Choudhary M."/>
            <person name="Donohue T.J."/>
            <person name="Kaplan S."/>
        </authorList>
    </citation>
    <scope>NUCLEOTIDE SEQUENCE [LARGE SCALE GENOMIC DNA]</scope>
    <source>
        <strain>ATCC 17029 / ATH 2.4.9</strain>
    </source>
</reference>